<protein>
    <recommendedName>
        <fullName evidence="1">3-isopropylmalate dehydrogenase</fullName>
        <ecNumber evidence="1">1.1.1.85</ecNumber>
    </recommendedName>
    <alternativeName>
        <fullName evidence="1">3-IPM-DH</fullName>
    </alternativeName>
    <alternativeName>
        <fullName evidence="1">Beta-IPM dehydrogenase</fullName>
        <shortName evidence="1">IMDH</shortName>
    </alternativeName>
</protein>
<organism>
    <name type="scientific">Burkholderia lata (strain ATCC 17760 / DSM 23089 / LMG 22485 / NCIMB 9086 / R18194 / 383)</name>
    <dbReference type="NCBI Taxonomy" id="482957"/>
    <lineage>
        <taxon>Bacteria</taxon>
        <taxon>Pseudomonadati</taxon>
        <taxon>Pseudomonadota</taxon>
        <taxon>Betaproteobacteria</taxon>
        <taxon>Burkholderiales</taxon>
        <taxon>Burkholderiaceae</taxon>
        <taxon>Burkholderia</taxon>
        <taxon>Burkholderia cepacia complex</taxon>
    </lineage>
</organism>
<evidence type="ECO:0000255" key="1">
    <source>
        <dbReference type="HAMAP-Rule" id="MF_01033"/>
    </source>
</evidence>
<keyword id="KW-0028">Amino-acid biosynthesis</keyword>
<keyword id="KW-0100">Branched-chain amino acid biosynthesis</keyword>
<keyword id="KW-0963">Cytoplasm</keyword>
<keyword id="KW-0432">Leucine biosynthesis</keyword>
<keyword id="KW-0460">Magnesium</keyword>
<keyword id="KW-0464">Manganese</keyword>
<keyword id="KW-0479">Metal-binding</keyword>
<keyword id="KW-0520">NAD</keyword>
<keyword id="KW-0560">Oxidoreductase</keyword>
<comment type="function">
    <text evidence="1">Catalyzes the oxidation of 3-carboxy-2-hydroxy-4-methylpentanoate (3-isopropylmalate) to 3-carboxy-4-methyl-2-oxopentanoate. The product decarboxylates to 4-methyl-2 oxopentanoate.</text>
</comment>
<comment type="catalytic activity">
    <reaction evidence="1">
        <text>(2R,3S)-3-isopropylmalate + NAD(+) = 4-methyl-2-oxopentanoate + CO2 + NADH</text>
        <dbReference type="Rhea" id="RHEA:32271"/>
        <dbReference type="ChEBI" id="CHEBI:16526"/>
        <dbReference type="ChEBI" id="CHEBI:17865"/>
        <dbReference type="ChEBI" id="CHEBI:35121"/>
        <dbReference type="ChEBI" id="CHEBI:57540"/>
        <dbReference type="ChEBI" id="CHEBI:57945"/>
        <dbReference type="EC" id="1.1.1.85"/>
    </reaction>
</comment>
<comment type="cofactor">
    <cofactor evidence="1">
        <name>Mg(2+)</name>
        <dbReference type="ChEBI" id="CHEBI:18420"/>
    </cofactor>
    <cofactor evidence="1">
        <name>Mn(2+)</name>
        <dbReference type="ChEBI" id="CHEBI:29035"/>
    </cofactor>
    <text evidence="1">Binds 1 Mg(2+) or Mn(2+) ion per subunit.</text>
</comment>
<comment type="pathway">
    <text evidence="1">Amino-acid biosynthesis; L-leucine biosynthesis; L-leucine from 3-methyl-2-oxobutanoate: step 3/4.</text>
</comment>
<comment type="subunit">
    <text evidence="1">Homodimer.</text>
</comment>
<comment type="subcellular location">
    <subcellularLocation>
        <location evidence="1">Cytoplasm</location>
    </subcellularLocation>
</comment>
<comment type="similarity">
    <text evidence="1">Belongs to the isocitrate and isopropylmalate dehydrogenases family. LeuB type 1 subfamily.</text>
</comment>
<accession>Q393X4</accession>
<reference key="1">
    <citation type="submission" date="2005-10" db="EMBL/GenBank/DDBJ databases">
        <title>Complete sequence of chromosome 2 of Burkholderia sp. 383.</title>
        <authorList>
            <consortium name="US DOE Joint Genome Institute"/>
            <person name="Copeland A."/>
            <person name="Lucas S."/>
            <person name="Lapidus A."/>
            <person name="Barry K."/>
            <person name="Detter J.C."/>
            <person name="Glavina T."/>
            <person name="Hammon N."/>
            <person name="Israni S."/>
            <person name="Pitluck S."/>
            <person name="Chain P."/>
            <person name="Malfatti S."/>
            <person name="Shin M."/>
            <person name="Vergez L."/>
            <person name="Schmutz J."/>
            <person name="Larimer F."/>
            <person name="Land M."/>
            <person name="Kyrpides N."/>
            <person name="Lykidis A."/>
            <person name="Richardson P."/>
        </authorList>
    </citation>
    <scope>NUCLEOTIDE SEQUENCE [LARGE SCALE GENOMIC DNA]</scope>
    <source>
        <strain>ATCC 17760 / DSM 23089 / LMG 22485 / NCIMB 9086 / R18194 / 383</strain>
    </source>
</reference>
<feature type="chain" id="PRO_0000250108" description="3-isopropylmalate dehydrogenase">
    <location>
        <begin position="1"/>
        <end position="355"/>
    </location>
</feature>
<feature type="binding site" evidence="1">
    <location>
        <position position="90"/>
    </location>
    <ligand>
        <name>substrate</name>
    </ligand>
</feature>
<feature type="binding site" evidence="1">
    <location>
        <position position="100"/>
    </location>
    <ligand>
        <name>substrate</name>
    </ligand>
</feature>
<feature type="binding site" evidence="1">
    <location>
        <position position="128"/>
    </location>
    <ligand>
        <name>substrate</name>
    </ligand>
</feature>
<feature type="binding site" evidence="1">
    <location>
        <position position="222"/>
    </location>
    <ligand>
        <name>Mg(2+)</name>
        <dbReference type="ChEBI" id="CHEBI:18420"/>
    </ligand>
</feature>
<feature type="binding site" evidence="1">
    <location>
        <position position="222"/>
    </location>
    <ligand>
        <name>substrate</name>
    </ligand>
</feature>
<feature type="binding site" evidence="1">
    <location>
        <position position="246"/>
    </location>
    <ligand>
        <name>Mg(2+)</name>
        <dbReference type="ChEBI" id="CHEBI:18420"/>
    </ligand>
</feature>
<feature type="binding site" evidence="1">
    <location>
        <position position="250"/>
    </location>
    <ligand>
        <name>Mg(2+)</name>
        <dbReference type="ChEBI" id="CHEBI:18420"/>
    </ligand>
</feature>
<feature type="binding site" evidence="1">
    <location>
        <begin position="280"/>
        <end position="292"/>
    </location>
    <ligand>
        <name>NAD(+)</name>
        <dbReference type="ChEBI" id="CHEBI:57540"/>
    </ligand>
</feature>
<feature type="site" description="Important for catalysis" evidence="1">
    <location>
        <position position="135"/>
    </location>
</feature>
<feature type="site" description="Important for catalysis" evidence="1">
    <location>
        <position position="190"/>
    </location>
</feature>
<proteinExistence type="inferred from homology"/>
<sequence length="355" mass="38336">MKIAVLPGDGIGPEIVNEAVKVLNALDEKFELEQAPVGGAGYEASGHPLPDATLKLAKEADAILFGAVGDWKYDSLERALRPEQAILGLRKHLELFANFRPAICYPQLVDASPLKPELVAGLDILIVRELNGDIYFGQPRGVRTAPDGLFAGEREGFDTMRYSEPEVRRIAHVAFQAARKRAKKLLSVDKANVLETSQFWRDIMIDVSKEYADVELSHMYVDNAAMQLAKAPKQFDVIVTGNMFGDILSDEASMLTGSIGMLPSASLDKNNKGLYEPSHGSAPDIAGKGIANPLATILSAAMMLRYSLNRAEQADRIERAVKTVLEQGYRTGDIATPGGQQVGTTAMGDAVVAAL</sequence>
<name>LEU3_BURL3</name>
<dbReference type="EC" id="1.1.1.85" evidence="1"/>
<dbReference type="EMBL" id="CP000152">
    <property type="protein sequence ID" value="ABB12242.1"/>
    <property type="molecule type" value="Genomic_DNA"/>
</dbReference>
<dbReference type="RefSeq" id="WP_011355725.1">
    <property type="nucleotide sequence ID" value="NC_007511.1"/>
</dbReference>
<dbReference type="SMR" id="Q393X4"/>
<dbReference type="GeneID" id="45098458"/>
<dbReference type="KEGG" id="bur:Bcep18194_B2131"/>
<dbReference type="PATRIC" id="fig|482957.22.peg.5886"/>
<dbReference type="HOGENOM" id="CLU_031953_0_3_4"/>
<dbReference type="UniPathway" id="UPA00048">
    <property type="reaction ID" value="UER00072"/>
</dbReference>
<dbReference type="Proteomes" id="UP000002705">
    <property type="component" value="Chromosome 2"/>
</dbReference>
<dbReference type="GO" id="GO:0005829">
    <property type="term" value="C:cytosol"/>
    <property type="evidence" value="ECO:0007669"/>
    <property type="project" value="TreeGrafter"/>
</dbReference>
<dbReference type="GO" id="GO:0003862">
    <property type="term" value="F:3-isopropylmalate dehydrogenase activity"/>
    <property type="evidence" value="ECO:0007669"/>
    <property type="project" value="UniProtKB-UniRule"/>
</dbReference>
<dbReference type="GO" id="GO:0000287">
    <property type="term" value="F:magnesium ion binding"/>
    <property type="evidence" value="ECO:0007669"/>
    <property type="project" value="InterPro"/>
</dbReference>
<dbReference type="GO" id="GO:0051287">
    <property type="term" value="F:NAD binding"/>
    <property type="evidence" value="ECO:0007669"/>
    <property type="project" value="InterPro"/>
</dbReference>
<dbReference type="GO" id="GO:0009098">
    <property type="term" value="P:L-leucine biosynthetic process"/>
    <property type="evidence" value="ECO:0007669"/>
    <property type="project" value="UniProtKB-UniRule"/>
</dbReference>
<dbReference type="FunFam" id="3.40.718.10:FF:000028">
    <property type="entry name" value="3-isopropylmalate dehydrogenase"/>
    <property type="match status" value="1"/>
</dbReference>
<dbReference type="Gene3D" id="3.40.718.10">
    <property type="entry name" value="Isopropylmalate Dehydrogenase"/>
    <property type="match status" value="1"/>
</dbReference>
<dbReference type="HAMAP" id="MF_01033">
    <property type="entry name" value="LeuB_type1"/>
    <property type="match status" value="1"/>
</dbReference>
<dbReference type="InterPro" id="IPR019818">
    <property type="entry name" value="IsoCit/isopropylmalate_DH_CS"/>
</dbReference>
<dbReference type="InterPro" id="IPR024084">
    <property type="entry name" value="IsoPropMal-DH-like_dom"/>
</dbReference>
<dbReference type="InterPro" id="IPR004429">
    <property type="entry name" value="Isopropylmalate_DH"/>
</dbReference>
<dbReference type="NCBIfam" id="TIGR00169">
    <property type="entry name" value="leuB"/>
    <property type="match status" value="1"/>
</dbReference>
<dbReference type="PANTHER" id="PTHR42979">
    <property type="entry name" value="3-ISOPROPYLMALATE DEHYDROGENASE"/>
    <property type="match status" value="1"/>
</dbReference>
<dbReference type="PANTHER" id="PTHR42979:SF1">
    <property type="entry name" value="3-ISOPROPYLMALATE DEHYDROGENASE"/>
    <property type="match status" value="1"/>
</dbReference>
<dbReference type="Pfam" id="PF00180">
    <property type="entry name" value="Iso_dh"/>
    <property type="match status" value="1"/>
</dbReference>
<dbReference type="SMART" id="SM01329">
    <property type="entry name" value="Iso_dh"/>
    <property type="match status" value="1"/>
</dbReference>
<dbReference type="SUPFAM" id="SSF53659">
    <property type="entry name" value="Isocitrate/Isopropylmalate dehydrogenase-like"/>
    <property type="match status" value="1"/>
</dbReference>
<dbReference type="PROSITE" id="PS00470">
    <property type="entry name" value="IDH_IMDH"/>
    <property type="match status" value="1"/>
</dbReference>
<gene>
    <name evidence="1" type="primary">leuB</name>
    <name type="ordered locus">Bcep18194_B2131</name>
</gene>